<keyword id="KW-0963">Cytoplasm</keyword>
<keyword id="KW-0342">GTP-binding</keyword>
<keyword id="KW-0378">Hydrolase</keyword>
<keyword id="KW-0460">Magnesium</keyword>
<keyword id="KW-0479">Metal-binding</keyword>
<keyword id="KW-0547">Nucleotide-binding</keyword>
<gene>
    <name evidence="1" type="primary">obg</name>
    <name type="ordered locus">PputGB1_0722</name>
</gene>
<evidence type="ECO:0000255" key="1">
    <source>
        <dbReference type="HAMAP-Rule" id="MF_01454"/>
    </source>
</evidence>
<evidence type="ECO:0000255" key="2">
    <source>
        <dbReference type="PROSITE-ProRule" id="PRU01231"/>
    </source>
</evidence>
<evidence type="ECO:0000256" key="3">
    <source>
        <dbReference type="SAM" id="MobiDB-lite"/>
    </source>
</evidence>
<proteinExistence type="inferred from homology"/>
<sequence length="408" mass="44813">MKFVDEVSIRVKAGDGGNGCMSFRREKFIENGGPNGGDGGDGGSVYMVADENLNTLVDYRYTRHHEAQRGSNGGSTDCTGKKGEDLFLRVPVGTTVIDASTQEVIGDLVTPGQKLMVAQGGWHGLGNTRFKSSTNRAPRQTTPGKPGDQRDLKMEMKVLADVGLLGLPNAGKSTFIRSVSAAKPKVADYPFTTLVPNLGVVSVDRWKSFVIADIPGLIEGASEGAGLGIRFLKHLARTRVLLHLVDIAPLDESSPADAAEVIVNELTRFSPSLAERERWLVLNKSDMVMDDERDERVQEVIDRLEWEGPVYVISAISKQGTDKLSHDLMRYLEDRADRLANDPAYAEELADLDQRIEDEARAQLQALDDARTLRRTGVKSVHDIGDDDGWDDDFEDDEDGPEIIYVRD</sequence>
<accession>B0KMF6</accession>
<name>OBG_PSEPG</name>
<protein>
    <recommendedName>
        <fullName evidence="1">GTPase Obg</fullName>
        <ecNumber evidence="1">3.6.5.-</ecNumber>
    </recommendedName>
    <alternativeName>
        <fullName evidence="1">GTP-binding protein Obg</fullName>
    </alternativeName>
</protein>
<feature type="chain" id="PRO_0000386159" description="GTPase Obg">
    <location>
        <begin position="1"/>
        <end position="408"/>
    </location>
</feature>
<feature type="domain" description="Obg" evidence="2">
    <location>
        <begin position="1"/>
        <end position="159"/>
    </location>
</feature>
<feature type="domain" description="OBG-type G" evidence="1">
    <location>
        <begin position="160"/>
        <end position="333"/>
    </location>
</feature>
<feature type="region of interest" description="Disordered" evidence="3">
    <location>
        <begin position="127"/>
        <end position="150"/>
    </location>
</feature>
<feature type="region of interest" description="Disordered" evidence="3">
    <location>
        <begin position="382"/>
        <end position="408"/>
    </location>
</feature>
<feature type="compositionally biased region" description="Polar residues" evidence="3">
    <location>
        <begin position="129"/>
        <end position="143"/>
    </location>
</feature>
<feature type="compositionally biased region" description="Acidic residues" evidence="3">
    <location>
        <begin position="385"/>
        <end position="401"/>
    </location>
</feature>
<feature type="binding site" evidence="1">
    <location>
        <begin position="166"/>
        <end position="173"/>
    </location>
    <ligand>
        <name>GTP</name>
        <dbReference type="ChEBI" id="CHEBI:37565"/>
    </ligand>
</feature>
<feature type="binding site" evidence="1">
    <location>
        <position position="173"/>
    </location>
    <ligand>
        <name>Mg(2+)</name>
        <dbReference type="ChEBI" id="CHEBI:18420"/>
    </ligand>
</feature>
<feature type="binding site" evidence="1">
    <location>
        <begin position="191"/>
        <end position="195"/>
    </location>
    <ligand>
        <name>GTP</name>
        <dbReference type="ChEBI" id="CHEBI:37565"/>
    </ligand>
</feature>
<feature type="binding site" evidence="1">
    <location>
        <position position="193"/>
    </location>
    <ligand>
        <name>Mg(2+)</name>
        <dbReference type="ChEBI" id="CHEBI:18420"/>
    </ligand>
</feature>
<feature type="binding site" evidence="1">
    <location>
        <begin position="213"/>
        <end position="216"/>
    </location>
    <ligand>
        <name>GTP</name>
        <dbReference type="ChEBI" id="CHEBI:37565"/>
    </ligand>
</feature>
<feature type="binding site" evidence="1">
    <location>
        <begin position="283"/>
        <end position="286"/>
    </location>
    <ligand>
        <name>GTP</name>
        <dbReference type="ChEBI" id="CHEBI:37565"/>
    </ligand>
</feature>
<feature type="binding site" evidence="1">
    <location>
        <begin position="314"/>
        <end position="316"/>
    </location>
    <ligand>
        <name>GTP</name>
        <dbReference type="ChEBI" id="CHEBI:37565"/>
    </ligand>
</feature>
<organism>
    <name type="scientific">Pseudomonas putida (strain GB-1)</name>
    <dbReference type="NCBI Taxonomy" id="76869"/>
    <lineage>
        <taxon>Bacteria</taxon>
        <taxon>Pseudomonadati</taxon>
        <taxon>Pseudomonadota</taxon>
        <taxon>Gammaproteobacteria</taxon>
        <taxon>Pseudomonadales</taxon>
        <taxon>Pseudomonadaceae</taxon>
        <taxon>Pseudomonas</taxon>
    </lineage>
</organism>
<reference key="1">
    <citation type="submission" date="2008-01" db="EMBL/GenBank/DDBJ databases">
        <title>Complete sequence of Pseudomonas putida GB-1.</title>
        <authorList>
            <consortium name="US DOE Joint Genome Institute"/>
            <person name="Copeland A."/>
            <person name="Lucas S."/>
            <person name="Lapidus A."/>
            <person name="Barry K."/>
            <person name="Glavina del Rio T."/>
            <person name="Dalin E."/>
            <person name="Tice H."/>
            <person name="Pitluck S."/>
            <person name="Bruce D."/>
            <person name="Goodwin L."/>
            <person name="Chertkov O."/>
            <person name="Brettin T."/>
            <person name="Detter J.C."/>
            <person name="Han C."/>
            <person name="Kuske C.R."/>
            <person name="Schmutz J."/>
            <person name="Larimer F."/>
            <person name="Land M."/>
            <person name="Hauser L."/>
            <person name="Kyrpides N."/>
            <person name="Kim E."/>
            <person name="McCarthy J.K."/>
            <person name="Richardson P."/>
        </authorList>
    </citation>
    <scope>NUCLEOTIDE SEQUENCE [LARGE SCALE GENOMIC DNA]</scope>
    <source>
        <strain>GB-1</strain>
    </source>
</reference>
<comment type="function">
    <text evidence="1">An essential GTPase which binds GTP, GDP and possibly (p)ppGpp with moderate affinity, with high nucleotide exchange rates and a fairly low GTP hydrolysis rate. Plays a role in control of the cell cycle, stress response, ribosome biogenesis and in those bacteria that undergo differentiation, in morphogenesis control.</text>
</comment>
<comment type="cofactor">
    <cofactor evidence="1">
        <name>Mg(2+)</name>
        <dbReference type="ChEBI" id="CHEBI:18420"/>
    </cofactor>
</comment>
<comment type="subunit">
    <text evidence="1">Monomer.</text>
</comment>
<comment type="subcellular location">
    <subcellularLocation>
        <location evidence="1">Cytoplasm</location>
    </subcellularLocation>
</comment>
<comment type="similarity">
    <text evidence="1">Belongs to the TRAFAC class OBG-HflX-like GTPase superfamily. OBG GTPase family.</text>
</comment>
<dbReference type="EC" id="3.6.5.-" evidence="1"/>
<dbReference type="EMBL" id="CP000926">
    <property type="protein sequence ID" value="ABY96632.1"/>
    <property type="molecule type" value="Genomic_DNA"/>
</dbReference>
<dbReference type="SMR" id="B0KMF6"/>
<dbReference type="KEGG" id="ppg:PputGB1_0722"/>
<dbReference type="eggNOG" id="COG0536">
    <property type="taxonomic scope" value="Bacteria"/>
</dbReference>
<dbReference type="HOGENOM" id="CLU_011747_2_0_6"/>
<dbReference type="Proteomes" id="UP000002157">
    <property type="component" value="Chromosome"/>
</dbReference>
<dbReference type="GO" id="GO:0005737">
    <property type="term" value="C:cytoplasm"/>
    <property type="evidence" value="ECO:0007669"/>
    <property type="project" value="UniProtKB-SubCell"/>
</dbReference>
<dbReference type="GO" id="GO:0005525">
    <property type="term" value="F:GTP binding"/>
    <property type="evidence" value="ECO:0007669"/>
    <property type="project" value="UniProtKB-UniRule"/>
</dbReference>
<dbReference type="GO" id="GO:0003924">
    <property type="term" value="F:GTPase activity"/>
    <property type="evidence" value="ECO:0007669"/>
    <property type="project" value="UniProtKB-UniRule"/>
</dbReference>
<dbReference type="GO" id="GO:0000287">
    <property type="term" value="F:magnesium ion binding"/>
    <property type="evidence" value="ECO:0007669"/>
    <property type="project" value="InterPro"/>
</dbReference>
<dbReference type="GO" id="GO:0042254">
    <property type="term" value="P:ribosome biogenesis"/>
    <property type="evidence" value="ECO:0007669"/>
    <property type="project" value="UniProtKB-UniRule"/>
</dbReference>
<dbReference type="CDD" id="cd01898">
    <property type="entry name" value="Obg"/>
    <property type="match status" value="1"/>
</dbReference>
<dbReference type="FunFam" id="2.70.210.12:FF:000001">
    <property type="entry name" value="GTPase Obg"/>
    <property type="match status" value="1"/>
</dbReference>
<dbReference type="FunFam" id="3.40.50.300:FF:000185">
    <property type="entry name" value="GTPase Obg"/>
    <property type="match status" value="1"/>
</dbReference>
<dbReference type="Gene3D" id="2.70.210.12">
    <property type="entry name" value="GTP1/OBG domain"/>
    <property type="match status" value="1"/>
</dbReference>
<dbReference type="Gene3D" id="3.40.50.300">
    <property type="entry name" value="P-loop containing nucleotide triphosphate hydrolases"/>
    <property type="match status" value="1"/>
</dbReference>
<dbReference type="HAMAP" id="MF_01454">
    <property type="entry name" value="GTPase_Obg"/>
    <property type="match status" value="1"/>
</dbReference>
<dbReference type="InterPro" id="IPR031167">
    <property type="entry name" value="G_OBG"/>
</dbReference>
<dbReference type="InterPro" id="IPR006073">
    <property type="entry name" value="GTP-bd"/>
</dbReference>
<dbReference type="InterPro" id="IPR014100">
    <property type="entry name" value="GTP-bd_Obg/CgtA"/>
</dbReference>
<dbReference type="InterPro" id="IPR006074">
    <property type="entry name" value="GTP1-OBG_CS"/>
</dbReference>
<dbReference type="InterPro" id="IPR006169">
    <property type="entry name" value="GTP1_OBG_dom"/>
</dbReference>
<dbReference type="InterPro" id="IPR036726">
    <property type="entry name" value="GTP1_OBG_dom_sf"/>
</dbReference>
<dbReference type="InterPro" id="IPR045086">
    <property type="entry name" value="OBG_GTPase"/>
</dbReference>
<dbReference type="InterPro" id="IPR027417">
    <property type="entry name" value="P-loop_NTPase"/>
</dbReference>
<dbReference type="NCBIfam" id="TIGR02729">
    <property type="entry name" value="Obg_CgtA"/>
    <property type="match status" value="1"/>
</dbReference>
<dbReference type="NCBIfam" id="NF008955">
    <property type="entry name" value="PRK12297.1"/>
    <property type="match status" value="1"/>
</dbReference>
<dbReference type="NCBIfam" id="NF008956">
    <property type="entry name" value="PRK12299.1"/>
    <property type="match status" value="1"/>
</dbReference>
<dbReference type="PANTHER" id="PTHR11702">
    <property type="entry name" value="DEVELOPMENTALLY REGULATED GTP-BINDING PROTEIN-RELATED"/>
    <property type="match status" value="1"/>
</dbReference>
<dbReference type="PANTHER" id="PTHR11702:SF31">
    <property type="entry name" value="MITOCHONDRIAL RIBOSOME-ASSOCIATED GTPASE 2"/>
    <property type="match status" value="1"/>
</dbReference>
<dbReference type="Pfam" id="PF01018">
    <property type="entry name" value="GTP1_OBG"/>
    <property type="match status" value="1"/>
</dbReference>
<dbReference type="Pfam" id="PF01926">
    <property type="entry name" value="MMR_HSR1"/>
    <property type="match status" value="1"/>
</dbReference>
<dbReference type="PIRSF" id="PIRSF002401">
    <property type="entry name" value="GTP_bd_Obg/CgtA"/>
    <property type="match status" value="1"/>
</dbReference>
<dbReference type="PRINTS" id="PR00326">
    <property type="entry name" value="GTP1OBG"/>
</dbReference>
<dbReference type="SUPFAM" id="SSF82051">
    <property type="entry name" value="Obg GTP-binding protein N-terminal domain"/>
    <property type="match status" value="1"/>
</dbReference>
<dbReference type="SUPFAM" id="SSF52540">
    <property type="entry name" value="P-loop containing nucleoside triphosphate hydrolases"/>
    <property type="match status" value="1"/>
</dbReference>
<dbReference type="PROSITE" id="PS51710">
    <property type="entry name" value="G_OBG"/>
    <property type="match status" value="1"/>
</dbReference>
<dbReference type="PROSITE" id="PS00905">
    <property type="entry name" value="GTP1_OBG"/>
    <property type="match status" value="1"/>
</dbReference>
<dbReference type="PROSITE" id="PS51883">
    <property type="entry name" value="OBG"/>
    <property type="match status" value="1"/>
</dbReference>